<comment type="function">
    <text evidence="1">Exhibits a very high intrinsic GTPase hydrolysis rate. Involved in the addition of a carboxymethylaminomethyl (cmnm) group at the wobble position (U34) of certain tRNAs, forming tRNA-cmnm(5)s(2)U34.</text>
</comment>
<comment type="cofactor">
    <cofactor evidence="1">
        <name>K(+)</name>
        <dbReference type="ChEBI" id="CHEBI:29103"/>
    </cofactor>
    <text evidence="1">Binds 1 potassium ion per subunit.</text>
</comment>
<comment type="subunit">
    <text evidence="1">Homodimer. Heterotetramer of two MnmE and two MnmG subunits.</text>
</comment>
<comment type="subcellular location">
    <subcellularLocation>
        <location evidence="1">Cytoplasm</location>
    </subcellularLocation>
</comment>
<comment type="similarity">
    <text evidence="1">Belongs to the TRAFAC class TrmE-Era-EngA-EngB-Septin-like GTPase superfamily. TrmE GTPase family.</text>
</comment>
<sequence length="458" mass="50616">MKEFDTIAAIATALGEGGIAIIRVSGNKALEIVNKIFRGINGKDLLDIKPYTMRYGHMIDENNEIIDEVIVSFMKGPRSFTAEDTVEINCHGGIVATNKVLQNVIKAGARLAEPGEFTKRAFLNGRIDLSQAEAVMDIITAKTELSMKSAMTQSQGRLSTEINNLRKEALDILALIEYAVDFTEDDEEPDETIPVKVKEDVITLRGKVNNLIDTADEGKLIRDGLSMVIVGKPNVGKSSLLNALLNEKRAIVTDIAGTTRDVIEEYINLDGIPVRLVDTAGIRETEDVVEKIGVEKSKEKINEADLVILMLDTSRELDEEDKEIIDYIKDRKYIVLLNKVDLDRKLSSEIVDNLENKIELSAKTGFGIDDLKSKIKDLFFNGSIDAESVMVTNTRHKEALYRASENLDGALNGLNNNEFLDLVSIYVTSALRALGEITGAELEEDLVNKIFAEFCCGK</sequence>
<organism>
    <name type="scientific">Clostridium perfringens (strain 13 / Type A)</name>
    <dbReference type="NCBI Taxonomy" id="195102"/>
    <lineage>
        <taxon>Bacteria</taxon>
        <taxon>Bacillati</taxon>
        <taxon>Bacillota</taxon>
        <taxon>Clostridia</taxon>
        <taxon>Eubacteriales</taxon>
        <taxon>Clostridiaceae</taxon>
        <taxon>Clostridium</taxon>
    </lineage>
</organism>
<protein>
    <recommendedName>
        <fullName evidence="1">tRNA modification GTPase MnmE</fullName>
        <ecNumber evidence="1">3.6.-.-</ecNumber>
    </recommendedName>
</protein>
<name>MNME_CLOPE</name>
<evidence type="ECO:0000255" key="1">
    <source>
        <dbReference type="HAMAP-Rule" id="MF_00379"/>
    </source>
</evidence>
<feature type="chain" id="PRO_0000188870" description="tRNA modification GTPase MnmE">
    <location>
        <begin position="1"/>
        <end position="458"/>
    </location>
</feature>
<feature type="domain" description="TrmE-type G">
    <location>
        <begin position="224"/>
        <end position="380"/>
    </location>
</feature>
<feature type="binding site" evidence="1">
    <location>
        <position position="23"/>
    </location>
    <ligand>
        <name>(6S)-5-formyl-5,6,7,8-tetrahydrofolate</name>
        <dbReference type="ChEBI" id="CHEBI:57457"/>
    </ligand>
</feature>
<feature type="binding site" evidence="1">
    <location>
        <position position="87"/>
    </location>
    <ligand>
        <name>(6S)-5-formyl-5,6,7,8-tetrahydrofolate</name>
        <dbReference type="ChEBI" id="CHEBI:57457"/>
    </ligand>
</feature>
<feature type="binding site" evidence="1">
    <location>
        <position position="126"/>
    </location>
    <ligand>
        <name>(6S)-5-formyl-5,6,7,8-tetrahydrofolate</name>
        <dbReference type="ChEBI" id="CHEBI:57457"/>
    </ligand>
</feature>
<feature type="binding site" evidence="1">
    <location>
        <begin position="234"/>
        <end position="239"/>
    </location>
    <ligand>
        <name>GTP</name>
        <dbReference type="ChEBI" id="CHEBI:37565"/>
    </ligand>
</feature>
<feature type="binding site" evidence="1">
    <location>
        <position position="234"/>
    </location>
    <ligand>
        <name>K(+)</name>
        <dbReference type="ChEBI" id="CHEBI:29103"/>
    </ligand>
</feature>
<feature type="binding site" evidence="1">
    <location>
        <position position="238"/>
    </location>
    <ligand>
        <name>Mg(2+)</name>
        <dbReference type="ChEBI" id="CHEBI:18420"/>
    </ligand>
</feature>
<feature type="binding site" evidence="1">
    <location>
        <begin position="253"/>
        <end position="259"/>
    </location>
    <ligand>
        <name>GTP</name>
        <dbReference type="ChEBI" id="CHEBI:37565"/>
    </ligand>
</feature>
<feature type="binding site" evidence="1">
    <location>
        <position position="253"/>
    </location>
    <ligand>
        <name>K(+)</name>
        <dbReference type="ChEBI" id="CHEBI:29103"/>
    </ligand>
</feature>
<feature type="binding site" evidence="1">
    <location>
        <position position="255"/>
    </location>
    <ligand>
        <name>K(+)</name>
        <dbReference type="ChEBI" id="CHEBI:29103"/>
    </ligand>
</feature>
<feature type="binding site" evidence="1">
    <location>
        <position position="258"/>
    </location>
    <ligand>
        <name>K(+)</name>
        <dbReference type="ChEBI" id="CHEBI:29103"/>
    </ligand>
</feature>
<feature type="binding site" evidence="1">
    <location>
        <position position="259"/>
    </location>
    <ligand>
        <name>Mg(2+)</name>
        <dbReference type="ChEBI" id="CHEBI:18420"/>
    </ligand>
</feature>
<feature type="binding site" evidence="1">
    <location>
        <begin position="278"/>
        <end position="281"/>
    </location>
    <ligand>
        <name>GTP</name>
        <dbReference type="ChEBI" id="CHEBI:37565"/>
    </ligand>
</feature>
<feature type="binding site" evidence="1">
    <location>
        <position position="458"/>
    </location>
    <ligand>
        <name>(6S)-5-formyl-5,6,7,8-tetrahydrofolate</name>
        <dbReference type="ChEBI" id="CHEBI:57457"/>
    </ligand>
</feature>
<gene>
    <name evidence="1" type="primary">mnmE</name>
    <name evidence="1" type="synonym">thdF</name>
    <name evidence="1" type="synonym">trmE</name>
    <name type="ordered locus">CPE2655</name>
</gene>
<dbReference type="EC" id="3.6.-.-" evidence="1"/>
<dbReference type="EMBL" id="BA000016">
    <property type="protein sequence ID" value="BAB82361.1"/>
    <property type="molecule type" value="Genomic_DNA"/>
</dbReference>
<dbReference type="RefSeq" id="WP_003451045.1">
    <property type="nucleotide sequence ID" value="NC_003366.1"/>
</dbReference>
<dbReference type="SMR" id="Q8XH30"/>
<dbReference type="STRING" id="195102.gene:10491999"/>
<dbReference type="GeneID" id="93000730"/>
<dbReference type="KEGG" id="cpe:CPE2655"/>
<dbReference type="HOGENOM" id="CLU_019624_4_1_9"/>
<dbReference type="Proteomes" id="UP000000818">
    <property type="component" value="Chromosome"/>
</dbReference>
<dbReference type="GO" id="GO:0005829">
    <property type="term" value="C:cytosol"/>
    <property type="evidence" value="ECO:0007669"/>
    <property type="project" value="TreeGrafter"/>
</dbReference>
<dbReference type="GO" id="GO:0005525">
    <property type="term" value="F:GTP binding"/>
    <property type="evidence" value="ECO:0007669"/>
    <property type="project" value="UniProtKB-UniRule"/>
</dbReference>
<dbReference type="GO" id="GO:0003924">
    <property type="term" value="F:GTPase activity"/>
    <property type="evidence" value="ECO:0007669"/>
    <property type="project" value="UniProtKB-UniRule"/>
</dbReference>
<dbReference type="GO" id="GO:0046872">
    <property type="term" value="F:metal ion binding"/>
    <property type="evidence" value="ECO:0007669"/>
    <property type="project" value="UniProtKB-KW"/>
</dbReference>
<dbReference type="GO" id="GO:0030488">
    <property type="term" value="P:tRNA methylation"/>
    <property type="evidence" value="ECO:0007669"/>
    <property type="project" value="TreeGrafter"/>
</dbReference>
<dbReference type="GO" id="GO:0002098">
    <property type="term" value="P:tRNA wobble uridine modification"/>
    <property type="evidence" value="ECO:0007669"/>
    <property type="project" value="TreeGrafter"/>
</dbReference>
<dbReference type="CDD" id="cd04164">
    <property type="entry name" value="trmE"/>
    <property type="match status" value="1"/>
</dbReference>
<dbReference type="CDD" id="cd14858">
    <property type="entry name" value="TrmE_N"/>
    <property type="match status" value="1"/>
</dbReference>
<dbReference type="FunFam" id="3.30.1360.120:FF:000003">
    <property type="entry name" value="tRNA modification GTPase MnmE"/>
    <property type="match status" value="1"/>
</dbReference>
<dbReference type="FunFam" id="3.40.50.300:FF:000494">
    <property type="entry name" value="tRNA modification GTPase MnmE"/>
    <property type="match status" value="1"/>
</dbReference>
<dbReference type="Gene3D" id="3.40.50.300">
    <property type="entry name" value="P-loop containing nucleotide triphosphate hydrolases"/>
    <property type="match status" value="1"/>
</dbReference>
<dbReference type="Gene3D" id="3.30.1360.120">
    <property type="entry name" value="Probable tRNA modification gtpase trme, domain 1"/>
    <property type="match status" value="1"/>
</dbReference>
<dbReference type="Gene3D" id="1.20.120.430">
    <property type="entry name" value="tRNA modification GTPase MnmE domain 2"/>
    <property type="match status" value="1"/>
</dbReference>
<dbReference type="HAMAP" id="MF_00379">
    <property type="entry name" value="GTPase_MnmE"/>
    <property type="match status" value="1"/>
</dbReference>
<dbReference type="InterPro" id="IPR031168">
    <property type="entry name" value="G_TrmE"/>
</dbReference>
<dbReference type="InterPro" id="IPR006073">
    <property type="entry name" value="GTP-bd"/>
</dbReference>
<dbReference type="InterPro" id="IPR018948">
    <property type="entry name" value="GTP-bd_TrmE_N"/>
</dbReference>
<dbReference type="InterPro" id="IPR004520">
    <property type="entry name" value="GTPase_MnmE"/>
</dbReference>
<dbReference type="InterPro" id="IPR027368">
    <property type="entry name" value="MnmE_dom2"/>
</dbReference>
<dbReference type="InterPro" id="IPR025867">
    <property type="entry name" value="MnmE_helical"/>
</dbReference>
<dbReference type="InterPro" id="IPR027417">
    <property type="entry name" value="P-loop_NTPase"/>
</dbReference>
<dbReference type="InterPro" id="IPR005225">
    <property type="entry name" value="Small_GTP-bd"/>
</dbReference>
<dbReference type="InterPro" id="IPR027266">
    <property type="entry name" value="TrmE/GcvT_dom1"/>
</dbReference>
<dbReference type="NCBIfam" id="TIGR00450">
    <property type="entry name" value="mnmE_trmE_thdF"/>
    <property type="match status" value="1"/>
</dbReference>
<dbReference type="NCBIfam" id="NF003661">
    <property type="entry name" value="PRK05291.1-3"/>
    <property type="match status" value="1"/>
</dbReference>
<dbReference type="NCBIfam" id="TIGR00231">
    <property type="entry name" value="small_GTP"/>
    <property type="match status" value="1"/>
</dbReference>
<dbReference type="PANTHER" id="PTHR42714">
    <property type="entry name" value="TRNA MODIFICATION GTPASE GTPBP3"/>
    <property type="match status" value="1"/>
</dbReference>
<dbReference type="PANTHER" id="PTHR42714:SF2">
    <property type="entry name" value="TRNA MODIFICATION GTPASE GTPBP3, MITOCHONDRIAL"/>
    <property type="match status" value="1"/>
</dbReference>
<dbReference type="Pfam" id="PF01926">
    <property type="entry name" value="MMR_HSR1"/>
    <property type="match status" value="1"/>
</dbReference>
<dbReference type="Pfam" id="PF12631">
    <property type="entry name" value="MnmE_helical"/>
    <property type="match status" value="1"/>
</dbReference>
<dbReference type="Pfam" id="PF10396">
    <property type="entry name" value="TrmE_N"/>
    <property type="match status" value="1"/>
</dbReference>
<dbReference type="PRINTS" id="PR00326">
    <property type="entry name" value="GTP1OBG"/>
</dbReference>
<dbReference type="SUPFAM" id="SSF52540">
    <property type="entry name" value="P-loop containing nucleoside triphosphate hydrolases"/>
    <property type="match status" value="1"/>
</dbReference>
<dbReference type="PROSITE" id="PS51709">
    <property type="entry name" value="G_TRME"/>
    <property type="match status" value="1"/>
</dbReference>
<accession>Q8XH30</accession>
<keyword id="KW-0963">Cytoplasm</keyword>
<keyword id="KW-0342">GTP-binding</keyword>
<keyword id="KW-0378">Hydrolase</keyword>
<keyword id="KW-0460">Magnesium</keyword>
<keyword id="KW-0479">Metal-binding</keyword>
<keyword id="KW-0547">Nucleotide-binding</keyword>
<keyword id="KW-0630">Potassium</keyword>
<keyword id="KW-1185">Reference proteome</keyword>
<keyword id="KW-0819">tRNA processing</keyword>
<reference key="1">
    <citation type="journal article" date="2002" name="Proc. Natl. Acad. Sci. U.S.A.">
        <title>Complete genome sequence of Clostridium perfringens, an anaerobic flesh-eater.</title>
        <authorList>
            <person name="Shimizu T."/>
            <person name="Ohtani K."/>
            <person name="Hirakawa H."/>
            <person name="Ohshima K."/>
            <person name="Yamashita A."/>
            <person name="Shiba T."/>
            <person name="Ogasawara N."/>
            <person name="Hattori M."/>
            <person name="Kuhara S."/>
            <person name="Hayashi H."/>
        </authorList>
    </citation>
    <scope>NUCLEOTIDE SEQUENCE [LARGE SCALE GENOMIC DNA]</scope>
    <source>
        <strain>13 / Type A</strain>
    </source>
</reference>
<proteinExistence type="inferred from homology"/>